<protein>
    <recommendedName>
        <fullName evidence="1">Elongation factor Ts</fullName>
        <shortName evidence="1">EF-Ts</shortName>
    </recommendedName>
</protein>
<feature type="chain" id="PRO_0000323439" description="Elongation factor Ts">
    <location>
        <begin position="1"/>
        <end position="219"/>
    </location>
</feature>
<feature type="region of interest" description="Involved in Mg(2+) ion dislocation from EF-Tu" evidence="1">
    <location>
        <begin position="81"/>
        <end position="84"/>
    </location>
</feature>
<reference key="1">
    <citation type="journal article" date="2009" name="Appl. Environ. Microbiol.">
        <title>Three genomes from the phylum Acidobacteria provide insight into the lifestyles of these microorganisms in soils.</title>
        <authorList>
            <person name="Ward N.L."/>
            <person name="Challacombe J.F."/>
            <person name="Janssen P.H."/>
            <person name="Henrissat B."/>
            <person name="Coutinho P.M."/>
            <person name="Wu M."/>
            <person name="Xie G."/>
            <person name="Haft D.H."/>
            <person name="Sait M."/>
            <person name="Badger J."/>
            <person name="Barabote R.D."/>
            <person name="Bradley B."/>
            <person name="Brettin T.S."/>
            <person name="Brinkac L.M."/>
            <person name="Bruce D."/>
            <person name="Creasy T."/>
            <person name="Daugherty S.C."/>
            <person name="Davidsen T.M."/>
            <person name="DeBoy R.T."/>
            <person name="Detter J.C."/>
            <person name="Dodson R.J."/>
            <person name="Durkin A.S."/>
            <person name="Ganapathy A."/>
            <person name="Gwinn-Giglio M."/>
            <person name="Han C.S."/>
            <person name="Khouri H."/>
            <person name="Kiss H."/>
            <person name="Kothari S.P."/>
            <person name="Madupu R."/>
            <person name="Nelson K.E."/>
            <person name="Nelson W.C."/>
            <person name="Paulsen I."/>
            <person name="Penn K."/>
            <person name="Ren Q."/>
            <person name="Rosovitz M.J."/>
            <person name="Selengut J.D."/>
            <person name="Shrivastava S."/>
            <person name="Sullivan S.A."/>
            <person name="Tapia R."/>
            <person name="Thompson L.S."/>
            <person name="Watkins K.L."/>
            <person name="Yang Q."/>
            <person name="Yu C."/>
            <person name="Zafar N."/>
            <person name="Zhou L."/>
            <person name="Kuske C.R."/>
        </authorList>
    </citation>
    <scope>NUCLEOTIDE SEQUENCE [LARGE SCALE GENOMIC DNA]</scope>
    <source>
        <strain>Ellin345</strain>
    </source>
</reference>
<name>EFTS_KORVE</name>
<proteinExistence type="inferred from homology"/>
<evidence type="ECO:0000255" key="1">
    <source>
        <dbReference type="HAMAP-Rule" id="MF_00050"/>
    </source>
</evidence>
<dbReference type="EMBL" id="CP000360">
    <property type="protein sequence ID" value="ABF39570.1"/>
    <property type="molecule type" value="Genomic_DNA"/>
</dbReference>
<dbReference type="SMR" id="Q1IU80"/>
<dbReference type="STRING" id="204669.Acid345_0565"/>
<dbReference type="EnsemblBacteria" id="ABF39570">
    <property type="protein sequence ID" value="ABF39570"/>
    <property type="gene ID" value="Acid345_0565"/>
</dbReference>
<dbReference type="KEGG" id="aba:Acid345_0565"/>
<dbReference type="eggNOG" id="COG0264">
    <property type="taxonomic scope" value="Bacteria"/>
</dbReference>
<dbReference type="HOGENOM" id="CLU_047155_1_1_0"/>
<dbReference type="Proteomes" id="UP000002432">
    <property type="component" value="Chromosome"/>
</dbReference>
<dbReference type="GO" id="GO:0005737">
    <property type="term" value="C:cytoplasm"/>
    <property type="evidence" value="ECO:0007669"/>
    <property type="project" value="UniProtKB-SubCell"/>
</dbReference>
<dbReference type="GO" id="GO:0003746">
    <property type="term" value="F:translation elongation factor activity"/>
    <property type="evidence" value="ECO:0007669"/>
    <property type="project" value="UniProtKB-UniRule"/>
</dbReference>
<dbReference type="CDD" id="cd14275">
    <property type="entry name" value="UBA_EF-Ts"/>
    <property type="match status" value="1"/>
</dbReference>
<dbReference type="FunFam" id="1.10.286.20:FF:000001">
    <property type="entry name" value="Elongation factor Ts"/>
    <property type="match status" value="1"/>
</dbReference>
<dbReference type="FunFam" id="1.10.8.10:FF:000001">
    <property type="entry name" value="Elongation factor Ts"/>
    <property type="match status" value="1"/>
</dbReference>
<dbReference type="Gene3D" id="1.10.286.20">
    <property type="match status" value="1"/>
</dbReference>
<dbReference type="Gene3D" id="1.10.8.10">
    <property type="entry name" value="DNA helicase RuvA subunit, C-terminal domain"/>
    <property type="match status" value="1"/>
</dbReference>
<dbReference type="Gene3D" id="3.30.479.20">
    <property type="entry name" value="Elongation factor Ts, dimerisation domain"/>
    <property type="match status" value="1"/>
</dbReference>
<dbReference type="HAMAP" id="MF_00050">
    <property type="entry name" value="EF_Ts"/>
    <property type="match status" value="1"/>
</dbReference>
<dbReference type="InterPro" id="IPR036402">
    <property type="entry name" value="EF-Ts_dimer_sf"/>
</dbReference>
<dbReference type="InterPro" id="IPR001816">
    <property type="entry name" value="Transl_elong_EFTs/EF1B"/>
</dbReference>
<dbReference type="InterPro" id="IPR014039">
    <property type="entry name" value="Transl_elong_EFTs/EF1B_dimer"/>
</dbReference>
<dbReference type="InterPro" id="IPR009060">
    <property type="entry name" value="UBA-like_sf"/>
</dbReference>
<dbReference type="NCBIfam" id="TIGR00116">
    <property type="entry name" value="tsf"/>
    <property type="match status" value="2"/>
</dbReference>
<dbReference type="PANTHER" id="PTHR11741">
    <property type="entry name" value="ELONGATION FACTOR TS"/>
    <property type="match status" value="1"/>
</dbReference>
<dbReference type="PANTHER" id="PTHR11741:SF0">
    <property type="entry name" value="ELONGATION FACTOR TS, MITOCHONDRIAL"/>
    <property type="match status" value="1"/>
</dbReference>
<dbReference type="Pfam" id="PF00889">
    <property type="entry name" value="EF_TS"/>
    <property type="match status" value="1"/>
</dbReference>
<dbReference type="SUPFAM" id="SSF54713">
    <property type="entry name" value="Elongation factor Ts (EF-Ts), dimerisation domain"/>
    <property type="match status" value="1"/>
</dbReference>
<dbReference type="SUPFAM" id="SSF46934">
    <property type="entry name" value="UBA-like"/>
    <property type="match status" value="1"/>
</dbReference>
<comment type="function">
    <text evidence="1">Associates with the EF-Tu.GDP complex and induces the exchange of GDP to GTP. It remains bound to the aminoacyl-tRNA.EF-Tu.GTP complex up to the GTP hydrolysis stage on the ribosome.</text>
</comment>
<comment type="subcellular location">
    <subcellularLocation>
        <location evidence="1">Cytoplasm</location>
    </subcellularLocation>
</comment>
<comment type="similarity">
    <text evidence="1">Belongs to the EF-Ts family.</text>
</comment>
<keyword id="KW-0963">Cytoplasm</keyword>
<keyword id="KW-0251">Elongation factor</keyword>
<keyword id="KW-0648">Protein biosynthesis</keyword>
<keyword id="KW-1185">Reference proteome</keyword>
<gene>
    <name evidence="1" type="primary">tsf</name>
    <name type="ordered locus">Acid345_0565</name>
</gene>
<organism>
    <name type="scientific">Koribacter versatilis (strain Ellin345)</name>
    <dbReference type="NCBI Taxonomy" id="204669"/>
    <lineage>
        <taxon>Bacteria</taxon>
        <taxon>Pseudomonadati</taxon>
        <taxon>Acidobacteriota</taxon>
        <taxon>Terriglobia</taxon>
        <taxon>Terriglobales</taxon>
        <taxon>Candidatus Korobacteraceae</taxon>
        <taxon>Candidatus Korobacter</taxon>
    </lineage>
</organism>
<accession>Q1IU80</accession>
<sequence>MNISAAQVKDLREKTNAPMMDCKKALTEANGDIEQAIVILRKKGIASAAKKAARVTSEGSVVSYIHAGGKIGVLVEVNCESDFVARTEQFKELTHDIAMHIAASDPKFVRKEDVTPEYMEKEKEIYRDQAAKTGKPAPVIEKIVEGKMAKFYEEVCLLEQPFIKEQTISVGQLIATTIGKLGENISVKRFARFKVGDVGETVAISKASNEGEAEAPAAK</sequence>